<keyword id="KW-0067">ATP-binding</keyword>
<keyword id="KW-0436">Ligase</keyword>
<keyword id="KW-0547">Nucleotide-binding</keyword>
<keyword id="KW-0648">Protein biosynthesis</keyword>
<keyword id="KW-1185">Reference proteome</keyword>
<gene>
    <name type="primary">gatC2</name>
    <name type="ordered locus">CA_C2978</name>
</gene>
<comment type="function">
    <text evidence="1">Allows the formation of correctly charged Asn-tRNA(Asn) or Gln-tRNA(Gln) through the transamidation of misacylated Asp-tRNA(Asn) or Glu-tRNA(Gln) in organisms which lack either or both of asparaginyl-tRNA or glutaminyl-tRNA synthetases. The reaction takes place in the presence of glutamine and ATP through an activated phospho-Asp-tRNA(Asn) or phospho-Glu-tRNA(Gln) (By similarity).</text>
</comment>
<comment type="catalytic activity">
    <reaction>
        <text>L-glutamyl-tRNA(Gln) + L-glutamine + ATP + H2O = L-glutaminyl-tRNA(Gln) + L-glutamate + ADP + phosphate + H(+)</text>
        <dbReference type="Rhea" id="RHEA:17521"/>
        <dbReference type="Rhea" id="RHEA-COMP:9681"/>
        <dbReference type="Rhea" id="RHEA-COMP:9684"/>
        <dbReference type="ChEBI" id="CHEBI:15377"/>
        <dbReference type="ChEBI" id="CHEBI:15378"/>
        <dbReference type="ChEBI" id="CHEBI:29985"/>
        <dbReference type="ChEBI" id="CHEBI:30616"/>
        <dbReference type="ChEBI" id="CHEBI:43474"/>
        <dbReference type="ChEBI" id="CHEBI:58359"/>
        <dbReference type="ChEBI" id="CHEBI:78520"/>
        <dbReference type="ChEBI" id="CHEBI:78521"/>
        <dbReference type="ChEBI" id="CHEBI:456216"/>
    </reaction>
</comment>
<comment type="catalytic activity">
    <reaction>
        <text>L-aspartyl-tRNA(Asn) + L-glutamine + ATP + H2O = L-asparaginyl-tRNA(Asn) + L-glutamate + ADP + phosphate + 2 H(+)</text>
        <dbReference type="Rhea" id="RHEA:14513"/>
        <dbReference type="Rhea" id="RHEA-COMP:9674"/>
        <dbReference type="Rhea" id="RHEA-COMP:9677"/>
        <dbReference type="ChEBI" id="CHEBI:15377"/>
        <dbReference type="ChEBI" id="CHEBI:15378"/>
        <dbReference type="ChEBI" id="CHEBI:29985"/>
        <dbReference type="ChEBI" id="CHEBI:30616"/>
        <dbReference type="ChEBI" id="CHEBI:43474"/>
        <dbReference type="ChEBI" id="CHEBI:58359"/>
        <dbReference type="ChEBI" id="CHEBI:78515"/>
        <dbReference type="ChEBI" id="CHEBI:78516"/>
        <dbReference type="ChEBI" id="CHEBI:456216"/>
    </reaction>
</comment>
<comment type="subunit">
    <text evidence="1">Heterotrimer of A, B and C subunits.</text>
</comment>
<comment type="similarity">
    <text evidence="2">Belongs to the GatC family.</text>
</comment>
<proteinExistence type="inferred from homology"/>
<dbReference type="EC" id="6.3.5.-"/>
<dbReference type="EMBL" id="AE001437">
    <property type="protein sequence ID" value="AAK80920.1"/>
    <property type="molecule type" value="Genomic_DNA"/>
</dbReference>
<dbReference type="PIR" id="E97266">
    <property type="entry name" value="E97266"/>
</dbReference>
<dbReference type="RefSeq" id="NP_349580.1">
    <property type="nucleotide sequence ID" value="NC_003030.1"/>
</dbReference>
<dbReference type="SMR" id="Q97EX7"/>
<dbReference type="STRING" id="272562.CA_C2978"/>
<dbReference type="KEGG" id="cac:CA_C2978"/>
<dbReference type="PATRIC" id="fig|272562.8.peg.3163"/>
<dbReference type="eggNOG" id="COG0721">
    <property type="taxonomic scope" value="Bacteria"/>
</dbReference>
<dbReference type="HOGENOM" id="CLU_105899_1_2_9"/>
<dbReference type="OrthoDB" id="9813938at2"/>
<dbReference type="Proteomes" id="UP000000814">
    <property type="component" value="Chromosome"/>
</dbReference>
<dbReference type="GO" id="GO:0050566">
    <property type="term" value="F:asparaginyl-tRNA synthase (glutamine-hydrolyzing) activity"/>
    <property type="evidence" value="ECO:0007669"/>
    <property type="project" value="RHEA"/>
</dbReference>
<dbReference type="GO" id="GO:0005524">
    <property type="term" value="F:ATP binding"/>
    <property type="evidence" value="ECO:0007669"/>
    <property type="project" value="UniProtKB-KW"/>
</dbReference>
<dbReference type="GO" id="GO:0050567">
    <property type="term" value="F:glutaminyl-tRNA synthase (glutamine-hydrolyzing) activity"/>
    <property type="evidence" value="ECO:0007669"/>
    <property type="project" value="UniProtKB-UniRule"/>
</dbReference>
<dbReference type="GO" id="GO:0070681">
    <property type="term" value="P:glutaminyl-tRNAGln biosynthesis via transamidation"/>
    <property type="evidence" value="ECO:0007669"/>
    <property type="project" value="TreeGrafter"/>
</dbReference>
<dbReference type="GO" id="GO:0006450">
    <property type="term" value="P:regulation of translational fidelity"/>
    <property type="evidence" value="ECO:0007669"/>
    <property type="project" value="InterPro"/>
</dbReference>
<dbReference type="GO" id="GO:0006412">
    <property type="term" value="P:translation"/>
    <property type="evidence" value="ECO:0007669"/>
    <property type="project" value="UniProtKB-UniRule"/>
</dbReference>
<dbReference type="Gene3D" id="1.10.20.60">
    <property type="entry name" value="Glu-tRNAGln amidotransferase C subunit, N-terminal domain"/>
    <property type="match status" value="1"/>
</dbReference>
<dbReference type="HAMAP" id="MF_00122">
    <property type="entry name" value="GatC"/>
    <property type="match status" value="1"/>
</dbReference>
<dbReference type="InterPro" id="IPR036113">
    <property type="entry name" value="Asp/Glu-ADT_sf_sub_c"/>
</dbReference>
<dbReference type="InterPro" id="IPR003837">
    <property type="entry name" value="GatC"/>
</dbReference>
<dbReference type="NCBIfam" id="TIGR00135">
    <property type="entry name" value="gatC"/>
    <property type="match status" value="1"/>
</dbReference>
<dbReference type="PANTHER" id="PTHR15004">
    <property type="entry name" value="GLUTAMYL-TRNA(GLN) AMIDOTRANSFERASE SUBUNIT C, MITOCHONDRIAL"/>
    <property type="match status" value="1"/>
</dbReference>
<dbReference type="PANTHER" id="PTHR15004:SF0">
    <property type="entry name" value="GLUTAMYL-TRNA(GLN) AMIDOTRANSFERASE SUBUNIT C, MITOCHONDRIAL"/>
    <property type="match status" value="1"/>
</dbReference>
<dbReference type="Pfam" id="PF02686">
    <property type="entry name" value="GatC"/>
    <property type="match status" value="1"/>
</dbReference>
<dbReference type="SUPFAM" id="SSF141000">
    <property type="entry name" value="Glu-tRNAGln amidotransferase C subunit"/>
    <property type="match status" value="1"/>
</dbReference>
<accession>Q97EX7</accession>
<organism>
    <name type="scientific">Clostridium acetobutylicum (strain ATCC 824 / DSM 792 / JCM 1419 / IAM 19013 / LMG 5710 / NBRC 13948 / NRRL B-527 / VKM B-1787 / 2291 / W)</name>
    <dbReference type="NCBI Taxonomy" id="272562"/>
    <lineage>
        <taxon>Bacteria</taxon>
        <taxon>Bacillati</taxon>
        <taxon>Bacillota</taxon>
        <taxon>Clostridia</taxon>
        <taxon>Eubacteriales</taxon>
        <taxon>Clostridiaceae</taxon>
        <taxon>Clostridium</taxon>
    </lineage>
</organism>
<feature type="chain" id="PRO_0000105294" description="Glutamyl-tRNA(Gln) amidotransferase subunit C 2">
    <location>
        <begin position="1"/>
        <end position="97"/>
    </location>
</feature>
<evidence type="ECO:0000250" key="1"/>
<evidence type="ECO:0000305" key="2"/>
<name>GATC2_CLOAB</name>
<reference key="1">
    <citation type="journal article" date="2001" name="J. Bacteriol.">
        <title>Genome sequence and comparative analysis of the solvent-producing bacterium Clostridium acetobutylicum.</title>
        <authorList>
            <person name="Noelling J."/>
            <person name="Breton G."/>
            <person name="Omelchenko M.V."/>
            <person name="Makarova K.S."/>
            <person name="Zeng Q."/>
            <person name="Gibson R."/>
            <person name="Lee H.M."/>
            <person name="Dubois J."/>
            <person name="Qiu D."/>
            <person name="Hitti J."/>
            <person name="Wolf Y.I."/>
            <person name="Tatusov R.L."/>
            <person name="Sabathe F."/>
            <person name="Doucette-Stamm L.A."/>
            <person name="Soucaille P."/>
            <person name="Daly M.J."/>
            <person name="Bennett G.N."/>
            <person name="Koonin E.V."/>
            <person name="Smith D.R."/>
        </authorList>
    </citation>
    <scope>NUCLEOTIDE SEQUENCE [LARGE SCALE GENOMIC DNA]</scope>
    <source>
        <strain>ATCC 824 / DSM 792 / JCM 1419 / IAM 19013 / LMG 5710 / NBRC 13948 / NRRL B-527 / VKM B-1787 / 2291 / W</strain>
    </source>
</reference>
<sequence length="97" mass="11171">MSDKHVDIDTVKYISKLSKLKFTDNEAKKLAGEFEAILGHFETIDKVDLSDINVNEFDEVNTEFRKDVPKVFEDKKKLMQNVKSLRDGAIEVPKIIE</sequence>
<protein>
    <recommendedName>
        <fullName>Glutamyl-tRNA(Gln) amidotransferase subunit C 2</fullName>
        <shortName>Glu-ADT subunit C 2</shortName>
        <ecNumber>6.3.5.-</ecNumber>
    </recommendedName>
</protein>